<evidence type="ECO:0000250" key="1"/>
<evidence type="ECO:0000255" key="2">
    <source>
        <dbReference type="PROSITE-ProRule" id="PRU00448"/>
    </source>
</evidence>
<evidence type="ECO:0000256" key="3">
    <source>
        <dbReference type="SAM" id="MobiDB-lite"/>
    </source>
</evidence>
<evidence type="ECO:0000305" key="4"/>
<protein>
    <recommendedName>
        <fullName>Probable calcium-binding protein CML15</fullName>
    </recommendedName>
    <alternativeName>
        <fullName>Calmodulin-like protein 15</fullName>
    </alternativeName>
</protein>
<keyword id="KW-0106">Calcium</keyword>
<keyword id="KW-0479">Metal-binding</keyword>
<keyword id="KW-1185">Reference proteome</keyword>
<keyword id="KW-0677">Repeat</keyword>
<comment type="function">
    <text evidence="1">Potential calcium sensor.</text>
</comment>
<comment type="caution">
    <text evidence="4">Although assigned as a calmodulin family member by PubMed:17263873, it only contains EF-hand domains.</text>
</comment>
<gene>
    <name type="primary">CML15</name>
    <name type="ordered locus">Os05g0380900</name>
    <name type="ordered locus">LOC_Os05g31620</name>
    <name type="ORF">OSJNBa0088M05.6</name>
</gene>
<accession>Q6L4D4</accession>
<accession>B7ED70</accession>
<proteinExistence type="evidence at transcript level"/>
<reference key="1">
    <citation type="journal article" date="2005" name="Mol. Genet. Genomics">
        <title>A fine physical map of the rice chromosome 5.</title>
        <authorList>
            <person name="Cheng C.-H."/>
            <person name="Chung M.C."/>
            <person name="Liu S.-M."/>
            <person name="Chen S.-K."/>
            <person name="Kao F.Y."/>
            <person name="Lin S.-J."/>
            <person name="Hsiao S.-H."/>
            <person name="Tseng I.C."/>
            <person name="Hsing Y.-I.C."/>
            <person name="Wu H.-P."/>
            <person name="Chen C.-S."/>
            <person name="Shaw J.-F."/>
            <person name="Wu J."/>
            <person name="Matsumoto T."/>
            <person name="Sasaki T."/>
            <person name="Chen H.-C."/>
            <person name="Chow T.-Y."/>
        </authorList>
    </citation>
    <scope>NUCLEOTIDE SEQUENCE [LARGE SCALE GENOMIC DNA]</scope>
    <source>
        <strain>cv. Nipponbare</strain>
    </source>
</reference>
<reference key="2">
    <citation type="journal article" date="2005" name="Nature">
        <title>The map-based sequence of the rice genome.</title>
        <authorList>
            <consortium name="International rice genome sequencing project (IRGSP)"/>
        </authorList>
    </citation>
    <scope>NUCLEOTIDE SEQUENCE [LARGE SCALE GENOMIC DNA]</scope>
    <source>
        <strain>cv. Nipponbare</strain>
    </source>
</reference>
<reference key="3">
    <citation type="journal article" date="2008" name="Nucleic Acids Res.">
        <title>The rice annotation project database (RAP-DB): 2008 update.</title>
        <authorList>
            <consortium name="The rice annotation project (RAP)"/>
        </authorList>
    </citation>
    <scope>GENOME REANNOTATION</scope>
    <source>
        <strain>cv. Nipponbare</strain>
    </source>
</reference>
<reference key="4">
    <citation type="journal article" date="2013" name="Rice">
        <title>Improvement of the Oryza sativa Nipponbare reference genome using next generation sequence and optical map data.</title>
        <authorList>
            <person name="Kawahara Y."/>
            <person name="de la Bastide M."/>
            <person name="Hamilton J.P."/>
            <person name="Kanamori H."/>
            <person name="McCombie W.R."/>
            <person name="Ouyang S."/>
            <person name="Schwartz D.C."/>
            <person name="Tanaka T."/>
            <person name="Wu J."/>
            <person name="Zhou S."/>
            <person name="Childs K.L."/>
            <person name="Davidson R.M."/>
            <person name="Lin H."/>
            <person name="Quesada-Ocampo L."/>
            <person name="Vaillancourt B."/>
            <person name="Sakai H."/>
            <person name="Lee S.S."/>
            <person name="Kim J."/>
            <person name="Numa H."/>
            <person name="Itoh T."/>
            <person name="Buell C.R."/>
            <person name="Matsumoto T."/>
        </authorList>
    </citation>
    <scope>GENOME REANNOTATION</scope>
    <source>
        <strain>cv. Nipponbare</strain>
    </source>
</reference>
<reference key="5">
    <citation type="journal article" date="2003" name="Science">
        <title>Collection, mapping, and annotation of over 28,000 cDNA clones from japonica rice.</title>
        <authorList>
            <consortium name="The rice full-length cDNA consortium"/>
        </authorList>
    </citation>
    <scope>NUCLEOTIDE SEQUENCE [LARGE SCALE MRNA]</scope>
    <source>
        <strain>cv. Nipponbare</strain>
    </source>
</reference>
<reference key="6">
    <citation type="journal article" date="2007" name="BMC Plant Biol.">
        <title>Genome-wide identification and analyses of the rice calmodulin and related potential calcium sensor proteins.</title>
        <authorList>
            <person name="Boonburapong B."/>
            <person name="Buaboocha T."/>
        </authorList>
    </citation>
    <scope>GENE FAMILY</scope>
    <scope>NOMENCLATURE</scope>
</reference>
<name>CML15_ORYSJ</name>
<organism>
    <name type="scientific">Oryza sativa subsp. japonica</name>
    <name type="common">Rice</name>
    <dbReference type="NCBI Taxonomy" id="39947"/>
    <lineage>
        <taxon>Eukaryota</taxon>
        <taxon>Viridiplantae</taxon>
        <taxon>Streptophyta</taxon>
        <taxon>Embryophyta</taxon>
        <taxon>Tracheophyta</taxon>
        <taxon>Spermatophyta</taxon>
        <taxon>Magnoliopsida</taxon>
        <taxon>Liliopsida</taxon>
        <taxon>Poales</taxon>
        <taxon>Poaceae</taxon>
        <taxon>BOP clade</taxon>
        <taxon>Oryzoideae</taxon>
        <taxon>Oryzeae</taxon>
        <taxon>Oryzinae</taxon>
        <taxon>Oryza</taxon>
        <taxon>Oryza sativa</taxon>
    </lineage>
</organism>
<dbReference type="EMBL" id="AC136222">
    <property type="protein sequence ID" value="AAT38054.1"/>
    <property type="molecule type" value="Genomic_DNA"/>
</dbReference>
<dbReference type="EMBL" id="AP008211">
    <property type="protein sequence ID" value="BAF17311.1"/>
    <property type="molecule type" value="Genomic_DNA"/>
</dbReference>
<dbReference type="EMBL" id="AP014961">
    <property type="protein sequence ID" value="BAS93764.1"/>
    <property type="molecule type" value="Genomic_DNA"/>
</dbReference>
<dbReference type="EMBL" id="AK067214">
    <property type="protein sequence ID" value="BAG90317.1"/>
    <property type="molecule type" value="mRNA"/>
</dbReference>
<dbReference type="EMBL" id="AK099962">
    <property type="protein sequence ID" value="BAG94376.1"/>
    <property type="molecule type" value="mRNA"/>
</dbReference>
<dbReference type="RefSeq" id="XP_015638162.1">
    <property type="nucleotide sequence ID" value="XM_015782676.1"/>
</dbReference>
<dbReference type="SMR" id="Q6L4D4"/>
<dbReference type="FunCoup" id="Q6L4D4">
    <property type="interactions" value="155"/>
</dbReference>
<dbReference type="STRING" id="39947.Q6L4D4"/>
<dbReference type="PaxDb" id="39947-Q6L4D4"/>
<dbReference type="EnsemblPlants" id="Os05t0380900-01">
    <property type="protein sequence ID" value="Os05t0380900-01"/>
    <property type="gene ID" value="Os05g0380900"/>
</dbReference>
<dbReference type="Gramene" id="Os05t0380900-01">
    <property type="protein sequence ID" value="Os05t0380900-01"/>
    <property type="gene ID" value="Os05g0380900"/>
</dbReference>
<dbReference type="KEGG" id="dosa:Os05g0380900"/>
<dbReference type="eggNOG" id="KOG0027">
    <property type="taxonomic scope" value="Eukaryota"/>
</dbReference>
<dbReference type="HOGENOM" id="CLU_061288_20_4_1"/>
<dbReference type="InParanoid" id="Q6L4D4"/>
<dbReference type="OMA" id="MEDCELM"/>
<dbReference type="OrthoDB" id="26525at2759"/>
<dbReference type="Proteomes" id="UP000000763">
    <property type="component" value="Chromosome 5"/>
</dbReference>
<dbReference type="Proteomes" id="UP000059680">
    <property type="component" value="Chromosome 5"/>
</dbReference>
<dbReference type="GO" id="GO:0005509">
    <property type="term" value="F:calcium ion binding"/>
    <property type="evidence" value="ECO:0007669"/>
    <property type="project" value="InterPro"/>
</dbReference>
<dbReference type="CDD" id="cd00051">
    <property type="entry name" value="EFh"/>
    <property type="match status" value="2"/>
</dbReference>
<dbReference type="FunFam" id="1.10.238.10:FF:000089">
    <property type="entry name" value="calmodulin-like protein 3"/>
    <property type="match status" value="1"/>
</dbReference>
<dbReference type="FunFam" id="1.10.238.10:FF:000438">
    <property type="entry name" value="Probable calcium-binding protein CML15"/>
    <property type="match status" value="1"/>
</dbReference>
<dbReference type="Gene3D" id="1.10.238.10">
    <property type="entry name" value="EF-hand"/>
    <property type="match status" value="2"/>
</dbReference>
<dbReference type="InterPro" id="IPR011992">
    <property type="entry name" value="EF-hand-dom_pair"/>
</dbReference>
<dbReference type="InterPro" id="IPR018247">
    <property type="entry name" value="EF_Hand_1_Ca_BS"/>
</dbReference>
<dbReference type="InterPro" id="IPR002048">
    <property type="entry name" value="EF_hand_dom"/>
</dbReference>
<dbReference type="InterPro" id="IPR039647">
    <property type="entry name" value="EF_hand_pair_protein_CML-like"/>
</dbReference>
<dbReference type="PANTHER" id="PTHR10891">
    <property type="entry name" value="EF-HAND CALCIUM-BINDING DOMAIN CONTAINING PROTEIN"/>
    <property type="match status" value="1"/>
</dbReference>
<dbReference type="Pfam" id="PF13499">
    <property type="entry name" value="EF-hand_7"/>
    <property type="match status" value="2"/>
</dbReference>
<dbReference type="SMART" id="SM00054">
    <property type="entry name" value="EFh"/>
    <property type="match status" value="4"/>
</dbReference>
<dbReference type="SUPFAM" id="SSF47473">
    <property type="entry name" value="EF-hand"/>
    <property type="match status" value="1"/>
</dbReference>
<dbReference type="PROSITE" id="PS00018">
    <property type="entry name" value="EF_HAND_1"/>
    <property type="match status" value="4"/>
</dbReference>
<dbReference type="PROSITE" id="PS50222">
    <property type="entry name" value="EF_HAND_2"/>
    <property type="match status" value="4"/>
</dbReference>
<sequence length="201" mass="21278">MGKVRAFFSRKGRGNSSGRSRSMREAAMNVDWSPRPSDLAAAAAAKPRPPAAEDETERVFRKFDANGDGRISRAELAALFRSVGHAVTDDEVARMMQEADSDGDGYISLGEFAAISAPPPGDAAAAEEDLRHAFGVFDADGNGVITPAELARVLRGIGEAATVAQCRRMIDGVDRNGDGLINFEEFKLMMAAGAGFGRIAS</sequence>
<feature type="chain" id="PRO_0000338430" description="Probable calcium-binding protein CML15">
    <location>
        <begin position="1"/>
        <end position="201"/>
    </location>
</feature>
<feature type="domain" description="EF-hand 1" evidence="2">
    <location>
        <begin position="51"/>
        <end position="86"/>
    </location>
</feature>
<feature type="domain" description="EF-hand 2" evidence="2">
    <location>
        <begin position="87"/>
        <end position="122"/>
    </location>
</feature>
<feature type="domain" description="EF-hand 3" evidence="2">
    <location>
        <begin position="125"/>
        <end position="160"/>
    </location>
</feature>
<feature type="domain" description="EF-hand 4" evidence="2">
    <location>
        <begin position="161"/>
        <end position="196"/>
    </location>
</feature>
<feature type="region of interest" description="Disordered" evidence="3">
    <location>
        <begin position="1"/>
        <end position="55"/>
    </location>
</feature>
<feature type="binding site" evidence="2">
    <location>
        <position position="64"/>
    </location>
    <ligand>
        <name>Ca(2+)</name>
        <dbReference type="ChEBI" id="CHEBI:29108"/>
        <label>1</label>
    </ligand>
</feature>
<feature type="binding site" evidence="2">
    <location>
        <position position="66"/>
    </location>
    <ligand>
        <name>Ca(2+)</name>
        <dbReference type="ChEBI" id="CHEBI:29108"/>
        <label>1</label>
    </ligand>
</feature>
<feature type="binding site" evidence="2">
    <location>
        <position position="68"/>
    </location>
    <ligand>
        <name>Ca(2+)</name>
        <dbReference type="ChEBI" id="CHEBI:29108"/>
        <label>1</label>
    </ligand>
</feature>
<feature type="binding site" evidence="2">
    <location>
        <position position="70"/>
    </location>
    <ligand>
        <name>Ca(2+)</name>
        <dbReference type="ChEBI" id="CHEBI:29108"/>
        <label>1</label>
    </ligand>
</feature>
<feature type="binding site" evidence="2">
    <location>
        <position position="75"/>
    </location>
    <ligand>
        <name>Ca(2+)</name>
        <dbReference type="ChEBI" id="CHEBI:29108"/>
        <label>1</label>
    </ligand>
</feature>
<feature type="binding site" evidence="2">
    <location>
        <position position="100"/>
    </location>
    <ligand>
        <name>Ca(2+)</name>
        <dbReference type="ChEBI" id="CHEBI:29108"/>
        <label>2</label>
    </ligand>
</feature>
<feature type="binding site" evidence="2">
    <location>
        <position position="102"/>
    </location>
    <ligand>
        <name>Ca(2+)</name>
        <dbReference type="ChEBI" id="CHEBI:29108"/>
        <label>2</label>
    </ligand>
</feature>
<feature type="binding site" evidence="2">
    <location>
        <position position="104"/>
    </location>
    <ligand>
        <name>Ca(2+)</name>
        <dbReference type="ChEBI" id="CHEBI:29108"/>
        <label>2</label>
    </ligand>
</feature>
<feature type="binding site" evidence="2">
    <location>
        <position position="106"/>
    </location>
    <ligand>
        <name>Ca(2+)</name>
        <dbReference type="ChEBI" id="CHEBI:29108"/>
        <label>2</label>
    </ligand>
</feature>
<feature type="binding site" evidence="2">
    <location>
        <position position="111"/>
    </location>
    <ligand>
        <name>Ca(2+)</name>
        <dbReference type="ChEBI" id="CHEBI:29108"/>
        <label>2</label>
    </ligand>
</feature>
<feature type="binding site" evidence="2">
    <location>
        <position position="138"/>
    </location>
    <ligand>
        <name>Ca(2+)</name>
        <dbReference type="ChEBI" id="CHEBI:29108"/>
        <label>3</label>
    </ligand>
</feature>
<feature type="binding site" evidence="2">
    <location>
        <position position="140"/>
    </location>
    <ligand>
        <name>Ca(2+)</name>
        <dbReference type="ChEBI" id="CHEBI:29108"/>
        <label>3</label>
    </ligand>
</feature>
<feature type="binding site" evidence="2">
    <location>
        <position position="142"/>
    </location>
    <ligand>
        <name>Ca(2+)</name>
        <dbReference type="ChEBI" id="CHEBI:29108"/>
        <label>3</label>
    </ligand>
</feature>
<feature type="binding site" evidence="2">
    <location>
        <position position="149"/>
    </location>
    <ligand>
        <name>Ca(2+)</name>
        <dbReference type="ChEBI" id="CHEBI:29108"/>
        <label>3</label>
    </ligand>
</feature>
<feature type="binding site" evidence="2">
    <location>
        <position position="174"/>
    </location>
    <ligand>
        <name>Ca(2+)</name>
        <dbReference type="ChEBI" id="CHEBI:29108"/>
        <label>4</label>
    </ligand>
</feature>
<feature type="binding site" evidence="2">
    <location>
        <position position="176"/>
    </location>
    <ligand>
        <name>Ca(2+)</name>
        <dbReference type="ChEBI" id="CHEBI:29108"/>
        <label>4</label>
    </ligand>
</feature>
<feature type="binding site" evidence="2">
    <location>
        <position position="178"/>
    </location>
    <ligand>
        <name>Ca(2+)</name>
        <dbReference type="ChEBI" id="CHEBI:29108"/>
        <label>4</label>
    </ligand>
</feature>
<feature type="binding site" evidence="2">
    <location>
        <position position="185"/>
    </location>
    <ligand>
        <name>Ca(2+)</name>
        <dbReference type="ChEBI" id="CHEBI:29108"/>
        <label>4</label>
    </ligand>
</feature>